<gene>
    <name evidence="1" type="primary">cysI</name>
    <name type="ordered locus">EFER_0299</name>
</gene>
<comment type="function">
    <text evidence="1">Component of the sulfite reductase complex that catalyzes the 6-electron reduction of sulfite to sulfide. This is one of several activities required for the biosynthesis of L-cysteine from sulfate.</text>
</comment>
<comment type="catalytic activity">
    <reaction evidence="1">
        <text>hydrogen sulfide + 3 NADP(+) + 3 H2O = sulfite + 3 NADPH + 4 H(+)</text>
        <dbReference type="Rhea" id="RHEA:13801"/>
        <dbReference type="ChEBI" id="CHEBI:15377"/>
        <dbReference type="ChEBI" id="CHEBI:15378"/>
        <dbReference type="ChEBI" id="CHEBI:17359"/>
        <dbReference type="ChEBI" id="CHEBI:29919"/>
        <dbReference type="ChEBI" id="CHEBI:57783"/>
        <dbReference type="ChEBI" id="CHEBI:58349"/>
        <dbReference type="EC" id="1.8.1.2"/>
    </reaction>
</comment>
<comment type="cofactor">
    <cofactor evidence="1">
        <name>siroheme</name>
        <dbReference type="ChEBI" id="CHEBI:60052"/>
    </cofactor>
    <text evidence="1">Binds 1 siroheme per subunit.</text>
</comment>
<comment type="cofactor">
    <cofactor evidence="1">
        <name>[4Fe-4S] cluster</name>
        <dbReference type="ChEBI" id="CHEBI:49883"/>
    </cofactor>
    <text evidence="1">Binds 1 [4Fe-4S] cluster per subunit.</text>
</comment>
<comment type="pathway">
    <text evidence="1">Sulfur metabolism; hydrogen sulfide biosynthesis; hydrogen sulfide from sulfite (NADPH route): step 1/1.</text>
</comment>
<comment type="subunit">
    <text evidence="1">Alpha(8)-beta(8). The alpha component is a flavoprotein, the beta component is a hemoprotein.</text>
</comment>
<comment type="similarity">
    <text evidence="1">Belongs to the nitrite and sulfite reductase 4Fe-4S domain family.</text>
</comment>
<keyword id="KW-0004">4Fe-4S</keyword>
<keyword id="KW-0028">Amino-acid biosynthesis</keyword>
<keyword id="KW-0198">Cysteine biosynthesis</keyword>
<keyword id="KW-0349">Heme</keyword>
<keyword id="KW-0408">Iron</keyword>
<keyword id="KW-0411">Iron-sulfur</keyword>
<keyword id="KW-0479">Metal-binding</keyword>
<keyword id="KW-0521">NADP</keyword>
<keyword id="KW-0560">Oxidoreductase</keyword>
<dbReference type="EC" id="1.8.1.2" evidence="1"/>
<dbReference type="EMBL" id="CU928158">
    <property type="protein sequence ID" value="CAQ87865.1"/>
    <property type="molecule type" value="Genomic_DNA"/>
</dbReference>
<dbReference type="RefSeq" id="WP_001003081.1">
    <property type="nucleotide sequence ID" value="NC_011740.1"/>
</dbReference>
<dbReference type="SMR" id="B7LWN9"/>
<dbReference type="GeneID" id="75058623"/>
<dbReference type="KEGG" id="efe:EFER_0299"/>
<dbReference type="HOGENOM" id="CLU_001975_3_2_6"/>
<dbReference type="OrthoDB" id="3189055at2"/>
<dbReference type="UniPathway" id="UPA00140">
    <property type="reaction ID" value="UER00207"/>
</dbReference>
<dbReference type="Proteomes" id="UP000000745">
    <property type="component" value="Chromosome"/>
</dbReference>
<dbReference type="GO" id="GO:0009337">
    <property type="term" value="C:sulfite reductase complex (NADPH)"/>
    <property type="evidence" value="ECO:0007669"/>
    <property type="project" value="InterPro"/>
</dbReference>
<dbReference type="GO" id="GO:0051539">
    <property type="term" value="F:4 iron, 4 sulfur cluster binding"/>
    <property type="evidence" value="ECO:0007669"/>
    <property type="project" value="UniProtKB-KW"/>
</dbReference>
<dbReference type="GO" id="GO:0020037">
    <property type="term" value="F:heme binding"/>
    <property type="evidence" value="ECO:0007669"/>
    <property type="project" value="InterPro"/>
</dbReference>
<dbReference type="GO" id="GO:0046872">
    <property type="term" value="F:metal ion binding"/>
    <property type="evidence" value="ECO:0007669"/>
    <property type="project" value="UniProtKB-KW"/>
</dbReference>
<dbReference type="GO" id="GO:0050661">
    <property type="term" value="F:NADP binding"/>
    <property type="evidence" value="ECO:0007669"/>
    <property type="project" value="InterPro"/>
</dbReference>
<dbReference type="GO" id="GO:0050311">
    <property type="term" value="F:sulfite reductase (ferredoxin) activity"/>
    <property type="evidence" value="ECO:0007669"/>
    <property type="project" value="TreeGrafter"/>
</dbReference>
<dbReference type="GO" id="GO:0004783">
    <property type="term" value="F:sulfite reductase (NADPH) activity"/>
    <property type="evidence" value="ECO:0007669"/>
    <property type="project" value="UniProtKB-UniRule"/>
</dbReference>
<dbReference type="GO" id="GO:0019344">
    <property type="term" value="P:cysteine biosynthetic process"/>
    <property type="evidence" value="ECO:0007669"/>
    <property type="project" value="UniProtKB-KW"/>
</dbReference>
<dbReference type="GO" id="GO:0070814">
    <property type="term" value="P:hydrogen sulfide biosynthetic process"/>
    <property type="evidence" value="ECO:0007669"/>
    <property type="project" value="UniProtKB-UniRule"/>
</dbReference>
<dbReference type="GO" id="GO:0000103">
    <property type="term" value="P:sulfate assimilation"/>
    <property type="evidence" value="ECO:0007669"/>
    <property type="project" value="UniProtKB-UniRule"/>
</dbReference>
<dbReference type="FunFam" id="3.30.413.10:FF:000003">
    <property type="entry name" value="Sulfite reductase [NADPH] hemoprotein beta-component"/>
    <property type="match status" value="1"/>
</dbReference>
<dbReference type="FunFam" id="3.30.413.10:FF:000004">
    <property type="entry name" value="Sulfite reductase [NADPH] hemoprotein beta-component"/>
    <property type="match status" value="1"/>
</dbReference>
<dbReference type="Gene3D" id="3.30.413.10">
    <property type="entry name" value="Sulfite Reductase Hemoprotein, domain 1"/>
    <property type="match status" value="2"/>
</dbReference>
<dbReference type="HAMAP" id="MF_01540">
    <property type="entry name" value="CysI"/>
    <property type="match status" value="1"/>
</dbReference>
<dbReference type="InterPro" id="IPR011786">
    <property type="entry name" value="CysI"/>
</dbReference>
<dbReference type="InterPro" id="IPR005117">
    <property type="entry name" value="NiRdtase/SiRdtase_haem-b_fer"/>
</dbReference>
<dbReference type="InterPro" id="IPR036136">
    <property type="entry name" value="Nit/Sulf_reduc_fer-like_dom_sf"/>
</dbReference>
<dbReference type="InterPro" id="IPR006067">
    <property type="entry name" value="NO2/SO3_Rdtase_4Fe4S_dom"/>
</dbReference>
<dbReference type="InterPro" id="IPR045169">
    <property type="entry name" value="NO2/SO3_Rdtase_4Fe4S_prot"/>
</dbReference>
<dbReference type="InterPro" id="IPR045854">
    <property type="entry name" value="NO2/SO3_Rdtase_4Fe4S_sf"/>
</dbReference>
<dbReference type="InterPro" id="IPR006066">
    <property type="entry name" value="NO2/SO3_Rdtase_FeS/sirohaem_BS"/>
</dbReference>
<dbReference type="NCBIfam" id="TIGR02041">
    <property type="entry name" value="CysI"/>
    <property type="match status" value="1"/>
</dbReference>
<dbReference type="NCBIfam" id="NF010029">
    <property type="entry name" value="PRK13504.1"/>
    <property type="match status" value="1"/>
</dbReference>
<dbReference type="PANTHER" id="PTHR11493:SF47">
    <property type="entry name" value="SULFITE REDUCTASE [NADPH] SUBUNIT BETA"/>
    <property type="match status" value="1"/>
</dbReference>
<dbReference type="PANTHER" id="PTHR11493">
    <property type="entry name" value="SULFITE REDUCTASE [NADPH] SUBUNIT BETA-RELATED"/>
    <property type="match status" value="1"/>
</dbReference>
<dbReference type="Pfam" id="PF01077">
    <property type="entry name" value="NIR_SIR"/>
    <property type="match status" value="1"/>
</dbReference>
<dbReference type="Pfam" id="PF03460">
    <property type="entry name" value="NIR_SIR_ferr"/>
    <property type="match status" value="2"/>
</dbReference>
<dbReference type="PRINTS" id="PR00397">
    <property type="entry name" value="SIROHAEM"/>
</dbReference>
<dbReference type="SUPFAM" id="SSF56014">
    <property type="entry name" value="Nitrite and sulphite reductase 4Fe-4S domain-like"/>
    <property type="match status" value="2"/>
</dbReference>
<dbReference type="SUPFAM" id="SSF55124">
    <property type="entry name" value="Nitrite/Sulfite reductase N-terminal domain-like"/>
    <property type="match status" value="2"/>
</dbReference>
<dbReference type="PROSITE" id="PS00365">
    <property type="entry name" value="NIR_SIR"/>
    <property type="match status" value="1"/>
</dbReference>
<sequence>MNEKHPGPLVVEGKLTDAERMKLESNYLRGTIAEDLNDGLTGGFKGDNFLLIRFHGMYQQDDRDIRAERAEQKLEPRHAMLLRCRLPGGVITTKQWQAIDKFAGENTIYGSIRLTNRQTFQFHGILKKNVKPVHQMLHSVGLDALATANDMNRNVLCTSNPYESQLHAEAYEWAKKISEHLLPRTRAYAEIWLDQEKVATTDEEPILGQTYLPRKFKTTVVIPPQNDIDLHANDMNFVAIAENGKLVGFNLLVGGGLSIEHGNKKTYARTASEFGYLPLEHTLAVAEAVVTTQRDWGNRTDRKNAKTKYTLERVGVETFKAEVERRAGIKFEPIRPYEFTGRGDRIGWVKGIDDKWHLTLFIENGRILDYPGRPLKTGLLEIAKIHKGDFRITANQNLIIAGVPESEKAKIEKIAKESGLMNAVTPQRENSMACVSFPTCPLAMAEAERFLPSFIDNIDNLMAKHGVSDEHIVMRVTGCPNGCGRAMLAEVGLVGKAPGRYNLHLGGNRIGTRIPRMHKENITEPEILATLDELIGRWAKEREAGEGFGDFTVRAGIIRPVLDPARDLWD</sequence>
<protein>
    <recommendedName>
        <fullName evidence="1">Sulfite reductase [NADPH] hemoprotein beta-component</fullName>
        <shortName evidence="1">SiR-HP</shortName>
        <shortName evidence="1">SiRHP</shortName>
        <ecNumber evidence="1">1.8.1.2</ecNumber>
    </recommendedName>
</protein>
<accession>B7LWN9</accession>
<reference key="1">
    <citation type="journal article" date="2009" name="PLoS Genet.">
        <title>Organised genome dynamics in the Escherichia coli species results in highly diverse adaptive paths.</title>
        <authorList>
            <person name="Touchon M."/>
            <person name="Hoede C."/>
            <person name="Tenaillon O."/>
            <person name="Barbe V."/>
            <person name="Baeriswyl S."/>
            <person name="Bidet P."/>
            <person name="Bingen E."/>
            <person name="Bonacorsi S."/>
            <person name="Bouchier C."/>
            <person name="Bouvet O."/>
            <person name="Calteau A."/>
            <person name="Chiapello H."/>
            <person name="Clermont O."/>
            <person name="Cruveiller S."/>
            <person name="Danchin A."/>
            <person name="Diard M."/>
            <person name="Dossat C."/>
            <person name="Karoui M.E."/>
            <person name="Frapy E."/>
            <person name="Garry L."/>
            <person name="Ghigo J.M."/>
            <person name="Gilles A.M."/>
            <person name="Johnson J."/>
            <person name="Le Bouguenec C."/>
            <person name="Lescat M."/>
            <person name="Mangenot S."/>
            <person name="Martinez-Jehanne V."/>
            <person name="Matic I."/>
            <person name="Nassif X."/>
            <person name="Oztas S."/>
            <person name="Petit M.A."/>
            <person name="Pichon C."/>
            <person name="Rouy Z."/>
            <person name="Ruf C.S."/>
            <person name="Schneider D."/>
            <person name="Tourret J."/>
            <person name="Vacherie B."/>
            <person name="Vallenet D."/>
            <person name="Medigue C."/>
            <person name="Rocha E.P.C."/>
            <person name="Denamur E."/>
        </authorList>
    </citation>
    <scope>NUCLEOTIDE SEQUENCE [LARGE SCALE GENOMIC DNA]</scope>
    <source>
        <strain>ATCC 35469 / DSM 13698 / BCRC 15582 / CCUG 18766 / IAM 14443 / JCM 21226 / LMG 7866 / NBRC 102419 / NCTC 12128 / CDC 0568-73</strain>
    </source>
</reference>
<organism>
    <name type="scientific">Escherichia fergusonii (strain ATCC 35469 / DSM 13698 / CCUG 18766 / IAM 14443 / JCM 21226 / LMG 7866 / NBRC 102419 / NCTC 12128 / CDC 0568-73)</name>
    <dbReference type="NCBI Taxonomy" id="585054"/>
    <lineage>
        <taxon>Bacteria</taxon>
        <taxon>Pseudomonadati</taxon>
        <taxon>Pseudomonadota</taxon>
        <taxon>Gammaproteobacteria</taxon>
        <taxon>Enterobacterales</taxon>
        <taxon>Enterobacteriaceae</taxon>
        <taxon>Escherichia</taxon>
    </lineage>
</organism>
<name>CYSI_ESCF3</name>
<feature type="chain" id="PRO_1000146650" description="Sulfite reductase [NADPH] hemoprotein beta-component">
    <location>
        <begin position="1"/>
        <end position="570"/>
    </location>
</feature>
<feature type="binding site" evidence="1">
    <location>
        <position position="434"/>
    </location>
    <ligand>
        <name>[4Fe-4S] cluster</name>
        <dbReference type="ChEBI" id="CHEBI:49883"/>
    </ligand>
</feature>
<feature type="binding site" evidence="1">
    <location>
        <position position="440"/>
    </location>
    <ligand>
        <name>[4Fe-4S] cluster</name>
        <dbReference type="ChEBI" id="CHEBI:49883"/>
    </ligand>
</feature>
<feature type="binding site" evidence="1">
    <location>
        <position position="479"/>
    </location>
    <ligand>
        <name>[4Fe-4S] cluster</name>
        <dbReference type="ChEBI" id="CHEBI:49883"/>
    </ligand>
</feature>
<feature type="binding site" evidence="1">
    <location>
        <position position="483"/>
    </location>
    <ligand>
        <name>[4Fe-4S] cluster</name>
        <dbReference type="ChEBI" id="CHEBI:49883"/>
    </ligand>
</feature>
<feature type="binding site" description="axial binding residue" evidence="1">
    <location>
        <position position="483"/>
    </location>
    <ligand>
        <name>siroheme</name>
        <dbReference type="ChEBI" id="CHEBI:60052"/>
    </ligand>
    <ligandPart>
        <name>Fe</name>
        <dbReference type="ChEBI" id="CHEBI:18248"/>
    </ligandPart>
</feature>
<evidence type="ECO:0000255" key="1">
    <source>
        <dbReference type="HAMAP-Rule" id="MF_01540"/>
    </source>
</evidence>
<proteinExistence type="inferred from homology"/>